<dbReference type="EC" id="3.4.22.-" evidence="3 5"/>
<dbReference type="EMBL" id="BX284601">
    <property type="protein sequence ID" value="CAB54483.2"/>
    <property type="molecule type" value="Genomic_DNA"/>
</dbReference>
<dbReference type="EMBL" id="BX284601">
    <property type="protein sequence ID" value="CCO25637.1"/>
    <property type="molecule type" value="Genomic_DNA"/>
</dbReference>
<dbReference type="RefSeq" id="NP_001263575.1">
    <property type="nucleotide sequence ID" value="NM_001276646.1"/>
</dbReference>
<dbReference type="RefSeq" id="NP_001359618.1">
    <molecule id="K8ESC5-2"/>
    <property type="nucleotide sequence ID" value="NM_001373652.2"/>
</dbReference>
<dbReference type="RefSeq" id="NP_001368160.1">
    <molecule id="K8ESC5-1"/>
    <property type="nucleotide sequence ID" value="NM_001381245.1"/>
</dbReference>
<dbReference type="RefSeq" id="NP_493375.2">
    <property type="nucleotide sequence ID" value="NM_060974.4"/>
</dbReference>
<dbReference type="SMR" id="K8ESC5"/>
<dbReference type="DIP" id="DIP-26265N"/>
<dbReference type="FunCoup" id="K8ESC5">
    <property type="interactions" value="1735"/>
</dbReference>
<dbReference type="IntAct" id="K8ESC5">
    <property type="interactions" value="3"/>
</dbReference>
<dbReference type="STRING" id="6239.Y87G2A.3b.1"/>
<dbReference type="MEROPS" id="C54.008"/>
<dbReference type="PaxDb" id="6239-Y87G2A.3b"/>
<dbReference type="PeptideAtlas" id="K8ESC5"/>
<dbReference type="EnsemblMetazoa" id="Y87G2A.3a.1">
    <molecule id="K8ESC5-2"/>
    <property type="protein sequence ID" value="Y87G2A.3a.1"/>
    <property type="gene ID" value="WBGene00013595"/>
</dbReference>
<dbReference type="EnsemblMetazoa" id="Y87G2A.3b.1">
    <molecule id="K8ESC5-1"/>
    <property type="protein sequence ID" value="Y87G2A.3b.1"/>
    <property type="gene ID" value="WBGene00013595"/>
</dbReference>
<dbReference type="GeneID" id="190777"/>
<dbReference type="UCSC" id="Y87G2A.3">
    <property type="organism name" value="c. elegans"/>
</dbReference>
<dbReference type="AGR" id="WB:WBGene00013595"/>
<dbReference type="WormBase" id="Y87G2A.3a">
    <molecule id="K8ESC5-2"/>
    <property type="protein sequence ID" value="CE42796"/>
    <property type="gene ID" value="WBGene00013595"/>
    <property type="gene designation" value="atg-4.1"/>
</dbReference>
<dbReference type="WormBase" id="Y87G2A.3b">
    <molecule id="K8ESC5-1"/>
    <property type="protein sequence ID" value="CE47833"/>
    <property type="gene ID" value="WBGene00013595"/>
    <property type="gene designation" value="atg-4.1"/>
</dbReference>
<dbReference type="eggNOG" id="KOG2674">
    <property type="taxonomic scope" value="Eukaryota"/>
</dbReference>
<dbReference type="GeneTree" id="ENSGT00530000063000"/>
<dbReference type="HOGENOM" id="CLU_021259_0_1_1"/>
<dbReference type="InParanoid" id="K8ESC5"/>
<dbReference type="OMA" id="FPPFVPY"/>
<dbReference type="OrthoDB" id="2960936at2759"/>
<dbReference type="PhylomeDB" id="K8ESC5"/>
<dbReference type="Reactome" id="R-CEL-1632852">
    <property type="pathway name" value="Macroautophagy"/>
</dbReference>
<dbReference type="PRO" id="PR:K8ESC5"/>
<dbReference type="Proteomes" id="UP000001940">
    <property type="component" value="Chromosome I"/>
</dbReference>
<dbReference type="Bgee" id="WBGene00013595">
    <property type="expression patterns" value="Expressed in pharyngeal muscle cell (C elegans) and 4 other cell types or tissues"/>
</dbReference>
<dbReference type="GO" id="GO:0005737">
    <property type="term" value="C:cytoplasm"/>
    <property type="evidence" value="ECO:0000314"/>
    <property type="project" value="WormBase"/>
</dbReference>
<dbReference type="GO" id="GO:0004197">
    <property type="term" value="F:cysteine-type endopeptidase activity"/>
    <property type="evidence" value="ECO:0000314"/>
    <property type="project" value="WormBase"/>
</dbReference>
<dbReference type="GO" id="GO:0019786">
    <property type="term" value="F:protein-phosphatidylethanolamide deconjugating activity"/>
    <property type="evidence" value="ECO:0000318"/>
    <property type="project" value="GO_Central"/>
</dbReference>
<dbReference type="GO" id="GO:0035973">
    <property type="term" value="P:aggrephagy"/>
    <property type="evidence" value="ECO:0000315"/>
    <property type="project" value="WormBase"/>
</dbReference>
<dbReference type="GO" id="GO:0000045">
    <property type="term" value="P:autophagosome assembly"/>
    <property type="evidence" value="ECO:0000318"/>
    <property type="project" value="GO_Central"/>
</dbReference>
<dbReference type="GO" id="GO:0000423">
    <property type="term" value="P:mitophagy"/>
    <property type="evidence" value="ECO:0000318"/>
    <property type="project" value="GO_Central"/>
</dbReference>
<dbReference type="GO" id="GO:0034727">
    <property type="term" value="P:piecemeal microautophagy of the nucleus"/>
    <property type="evidence" value="ECO:0000318"/>
    <property type="project" value="GO_Central"/>
</dbReference>
<dbReference type="GO" id="GO:0016485">
    <property type="term" value="P:protein processing"/>
    <property type="evidence" value="ECO:0000314"/>
    <property type="project" value="WormBase"/>
</dbReference>
<dbReference type="GO" id="GO:0015031">
    <property type="term" value="P:protein transport"/>
    <property type="evidence" value="ECO:0007669"/>
    <property type="project" value="UniProtKB-KW"/>
</dbReference>
<dbReference type="InterPro" id="IPR038765">
    <property type="entry name" value="Papain-like_cys_pep_sf"/>
</dbReference>
<dbReference type="InterPro" id="IPR005078">
    <property type="entry name" value="Peptidase_C54"/>
</dbReference>
<dbReference type="InterPro" id="IPR046792">
    <property type="entry name" value="Peptidase_C54_cat"/>
</dbReference>
<dbReference type="PANTHER" id="PTHR22624:SF49">
    <property type="entry name" value="CYSTEINE PROTEASE"/>
    <property type="match status" value="1"/>
</dbReference>
<dbReference type="PANTHER" id="PTHR22624">
    <property type="entry name" value="CYSTEINE PROTEASE ATG4"/>
    <property type="match status" value="1"/>
</dbReference>
<dbReference type="Pfam" id="PF03416">
    <property type="entry name" value="Peptidase_C54"/>
    <property type="match status" value="1"/>
</dbReference>
<dbReference type="SUPFAM" id="SSF54001">
    <property type="entry name" value="Cysteine proteinases"/>
    <property type="match status" value="1"/>
</dbReference>
<protein>
    <recommendedName>
        <fullName evidence="7">Cysteine protease atg-4.1</fullName>
        <ecNumber evidence="3 5">3.4.22.-</ecNumber>
    </recommendedName>
    <alternativeName>
        <fullName evidence="7">Autophagy-related protein 4 homolog 1</fullName>
    </alternativeName>
</protein>
<organism evidence="8">
    <name type="scientific">Caenorhabditis elegans</name>
    <dbReference type="NCBI Taxonomy" id="6239"/>
    <lineage>
        <taxon>Eukaryota</taxon>
        <taxon>Metazoa</taxon>
        <taxon>Ecdysozoa</taxon>
        <taxon>Nematoda</taxon>
        <taxon>Chromadorea</taxon>
        <taxon>Rhabditida</taxon>
        <taxon>Rhabditina</taxon>
        <taxon>Rhabditomorpha</taxon>
        <taxon>Rhabditoidea</taxon>
        <taxon>Rhabditidae</taxon>
        <taxon>Peloderinae</taxon>
        <taxon>Caenorhabditis</taxon>
    </lineage>
</organism>
<accession>K8ESC5</accession>
<accession>Q9NA30</accession>
<gene>
    <name evidence="10" type="primary">atg-4.1</name>
    <name evidence="10" type="ORF">Y87G2A.3</name>
</gene>
<comment type="function">
    <text evidence="5 6">Cysteine protease required for autophagy (PubMed:22767594, PubMed:30880001). Cleaves the C-terminal amino acid of ATG8 family proteins lgg-1, to reveal a C-terminal glycine (PubMed:22767594). Exposure of the glycine at the C-terminus is essential for ATG8 proteins conjugation to phosphatidylethanolamine (PE) and insertion to membranes, which is necessary for autophagy (Probable). Its cleavage activity is functionally redundant to atg-4.2, but it cleaves lgg-1 precursors more efficiently than atg-4.2 (Probable). Acts redundantly with atg-4.2 to promote the lgg-1 delipidation to release the protein from membranes, which facilitates multiple events during macroautophagy (PubMed:22767594). Unlike atg-4.2 does not seem to be required for autophagosome maturation (PubMed:30880001).</text>
</comment>
<comment type="catalytic activity">
    <reaction evidence="1">
        <text>[protein]-C-terminal L-amino acid-glycyl-phosphatidylethanolamide + H2O = [protein]-C-terminal L-amino acid-glycine + a 1,2-diacyl-sn-glycero-3-phosphoethanolamine</text>
        <dbReference type="Rhea" id="RHEA:67548"/>
        <dbReference type="Rhea" id="RHEA-COMP:17323"/>
        <dbReference type="Rhea" id="RHEA-COMP:17324"/>
        <dbReference type="ChEBI" id="CHEBI:15377"/>
        <dbReference type="ChEBI" id="CHEBI:64612"/>
        <dbReference type="ChEBI" id="CHEBI:172940"/>
        <dbReference type="ChEBI" id="CHEBI:172941"/>
    </reaction>
    <physiologicalReaction direction="left-to-right" evidence="1">
        <dbReference type="Rhea" id="RHEA:67549"/>
    </physiologicalReaction>
</comment>
<comment type="biophysicochemical properties">
    <kinetics>
        <KM evidence="5">18.97 uM for lgg-1</KM>
    </kinetics>
</comment>
<comment type="interaction">
    <interactant intactId="EBI-331850">
        <id>K8ESC5-2</id>
    </interactant>
    <interactant intactId="EBI-325374">
        <id>Q09490</id>
        <label>lgg-1</label>
    </interactant>
    <organismsDiffer>false</organismsDiffer>
    <experiments>3</experiments>
</comment>
<comment type="interaction">
    <interactant intactId="EBI-331850">
        <id>K8ESC5-2</id>
    </interactant>
    <interactant intactId="EBI-331856">
        <id>Q23536</id>
        <label>lgg-2</label>
    </interactant>
    <organismsDiffer>false</organismsDiffer>
    <experiments>3</experiments>
</comment>
<comment type="subcellular location">
    <subcellularLocation>
        <location evidence="2 3 5 6">Cytoplasm</location>
    </subcellularLocation>
</comment>
<comment type="alternative products">
    <event type="alternative splicing"/>
    <isoform>
        <id>K8ESC5-1</id>
        <name evidence="10">b</name>
        <sequence type="displayed"/>
    </isoform>
    <isoform>
        <id>K8ESC5-2</id>
        <name evidence="9">a</name>
        <sequence type="described" ref="VSP_060429"/>
    </isoform>
</comment>
<comment type="developmental stage">
    <text evidence="5">Ubiquitously expressed in embryos.</text>
</comment>
<comment type="similarity">
    <text evidence="2 3">Belongs to the peptidase C54 family.</text>
</comment>
<reference evidence="8" key="1">
    <citation type="journal article" date="1998" name="Science">
        <title>Genome sequence of the nematode C. elegans: a platform for investigating biology.</title>
        <authorList>
            <consortium name="The C. elegans sequencing consortium"/>
        </authorList>
    </citation>
    <scope>NUCLEOTIDE SEQUENCE [LARGE SCALE GENOMIC DNA]</scope>
    <source>
        <strain evidence="8">Bristol N2</strain>
    </source>
</reference>
<reference evidence="7" key="2">
    <citation type="journal article" date="2012" name="J. Biol. Chem.">
        <title>Differential function of the two Atg4 homologues in the aggrephagy pathway in Caenorhabditis elegans.</title>
        <authorList>
            <person name="Wu F."/>
            <person name="Li Y."/>
            <person name="Wang F."/>
            <person name="Noda N.N."/>
            <person name="Zhang H."/>
        </authorList>
    </citation>
    <scope>FUNCTION</scope>
    <scope>CATALYTIC ACTIVITY</scope>
    <scope>BIOPHYSICOCHEMICAL PROPERTIES</scope>
    <scope>SUBCELLULAR LOCATION</scope>
    <scope>DEVELOPMENTAL STAGE</scope>
    <scope>MUTAGENESIS OF HIS-129; 167-GLN--ALA-481; 187-GLN--ALA-481; GLY-293; ALA-298; 374-TRP--ALA-481 AND 412-GLN--ALA-481</scope>
</reference>
<reference evidence="7" key="3">
    <citation type="journal article" date="2019" name="Dev. Cell">
        <title>Maturation and Clearance of Autophagosomes in Neurons Depends on a Specific Cysteine Protease Isoform, ATG-4.2.</title>
        <authorList>
            <person name="Hill S.E."/>
            <person name="Kauffman K.J."/>
            <person name="Krout M."/>
            <person name="Richmond J.E."/>
            <person name="Melia T.J."/>
            <person name="Colon-Ramos D.A."/>
        </authorList>
    </citation>
    <scope>FUNCTION</scope>
    <scope>SUBCELLULAR LOCATION</scope>
    <scope>MUTAGENESIS OF 167-GLN--ALA-481</scope>
</reference>
<feature type="chain" id="PRO_0000448583" description="Cysteine protease atg-4.1">
    <location>
        <begin position="1"/>
        <end position="481"/>
    </location>
</feature>
<feature type="region of interest" description="Disordered" evidence="4">
    <location>
        <begin position="462"/>
        <end position="481"/>
    </location>
</feature>
<feature type="active site" description="Nucleophile" evidence="1">
    <location>
        <position position="112"/>
    </location>
</feature>
<feature type="active site" evidence="1">
    <location>
        <position position="313"/>
    </location>
</feature>
<feature type="active site" evidence="1">
    <location>
        <position position="315"/>
    </location>
</feature>
<feature type="splice variant" id="VSP_060429" description="In isoform a." evidence="7">
    <location>
        <begin position="1"/>
        <end position="27"/>
    </location>
</feature>
<feature type="mutagenesis site" description="In bp504; defective degradation of pgl-1- and sepa-1-containing protein aggregates in comma stage embryos. Reduces cleavage, but does not impair lipidation of lgg-1." evidence="5">
    <original>H</original>
    <variation>P</variation>
    <location>
        <position position="129"/>
    </location>
</feature>
<feature type="mutagenesis site" description="In bp501; defective degradation of pgl-1-, pgl-3-, sqst-1- and sepa-1-containing protein aggregates in comma stage embryos. Abolishes cleavage, but does not impair lipidation of lgg-1. In a atg-4.2 tm3948 mutant background, animals are viable, but do not lay viable eggs, and mutant embryos do not contain lipidated lgg-1. Degradation defect is rescued in an lgg-1 mutant background containing cleaved lgg-1. lgg-1-containing protein aggregates do not abnormally accumulate in neuronal cell bodies of AIY interneurons." evidence="5 6">
    <location>
        <begin position="167"/>
        <end position="481"/>
    </location>
</feature>
<feature type="mutagenesis site" description="In bp451; defective degradation of pgl-1- and sepa-1-containing protein aggregates in comma stage embryos. Reduces cleavage, but does not impair lipidation of lgg-1." evidence="5">
    <location>
        <begin position="187"/>
        <end position="481"/>
    </location>
</feature>
<feature type="mutagenesis site" description="In bp418; defective degradation of pgl-1- and sepa-1-containing protein aggregates in comma stage embryos." evidence="5">
    <original>G</original>
    <variation>S</variation>
    <location>
        <position position="293"/>
    </location>
</feature>
<feature type="mutagenesis site" description="In bp321; defective degradation of pgl-1- and sepa-1-containing protein aggregates in comma stage embryos. Reduces cleavage, but does not impair lipidation of lgg-1." evidence="5">
    <original>A</original>
    <variation>V</variation>
    <location>
        <position position="298"/>
    </location>
</feature>
<feature type="mutagenesis site" description="In bp482; defective degradation of pgl-1- and sepa-1-containing protein aggregates in comma stage embryos." evidence="5">
    <location>
        <begin position="374"/>
        <end position="481"/>
    </location>
</feature>
<feature type="mutagenesis site" description="In bp410; defective degradation of pgl-1- and sepa-1-containing protein aggregates in comma stage embryos." evidence="5">
    <location>
        <begin position="412"/>
        <end position="481"/>
    </location>
</feature>
<evidence type="ECO:0000250" key="1">
    <source>
        <dbReference type="UniProtKB" id="Q9Y4P1"/>
    </source>
</evidence>
<evidence type="ECO:0000255" key="2"/>
<evidence type="ECO:0000255" key="3">
    <source>
        <dbReference type="RuleBase" id="RU363115"/>
    </source>
</evidence>
<evidence type="ECO:0000256" key="4">
    <source>
        <dbReference type="SAM" id="MobiDB-lite"/>
    </source>
</evidence>
<evidence type="ECO:0000269" key="5">
    <source>
    </source>
</evidence>
<evidence type="ECO:0000269" key="6">
    <source>
    </source>
</evidence>
<evidence type="ECO:0000305" key="7"/>
<evidence type="ECO:0000312" key="8">
    <source>
        <dbReference type="Proteomes" id="UP000001940"/>
    </source>
</evidence>
<evidence type="ECO:0000312" key="9">
    <source>
        <dbReference type="WormBase" id="Y87G2A.3a"/>
    </source>
</evidence>
<evidence type="ECO:0000312" key="10">
    <source>
        <dbReference type="WormBase" id="Y87G2A.3b"/>
    </source>
</evidence>
<proteinExistence type="evidence at protein level"/>
<sequence>MLSILPLAYSNFSRILQYFEQLPVVDKMTEEILKQGVGIVETSLTFEPPFCESFERISIDNFPIFALGKEISKEDGIEAMKKYVTSRFWFTYRRDFSPIGGTGPSTDQGWGCMLRCAQMLLGEVLLRRHIGRHFEWDIEKTSEIYEKILQMFFDEKDALYSIHQIAQMGVTEGKEVSKWFGPNTAAQVMKKLTIFDDWSNIAVHVALDNILVKEDAITMATSYPSEDAVKLIMENGLVDKNRLSLSPGNIIPEWRPLLLMIPLRLGLTTINPCYLSAIQEFFKIPQCVGIIGGRPNHALYFVGMSGSKLFYLDPHYCRPKTESTAKMYAEKDSTATTDDVGFSHLEELVPLPSQTADVYTKMDDSTYHCQMMLWIEYENVDPSLALAMFCETRDEFENLCETLQKTTLPASQPPMFEFLQRRPKYLPKFEPYTGVSMKIEMKEFDDIGAANVKIDDDFEVLDVHTEEEDADEDNDDDVANA</sequence>
<name>ATG41_CAEEL</name>
<keyword id="KW-0025">Alternative splicing</keyword>
<keyword id="KW-0072">Autophagy</keyword>
<keyword id="KW-0963">Cytoplasm</keyword>
<keyword id="KW-0378">Hydrolase</keyword>
<keyword id="KW-0645">Protease</keyword>
<keyword id="KW-0653">Protein transport</keyword>
<keyword id="KW-1185">Reference proteome</keyword>
<keyword id="KW-0788">Thiol protease</keyword>
<keyword id="KW-0813">Transport</keyword>